<evidence type="ECO:0000255" key="1">
    <source>
        <dbReference type="HAMAP-Rule" id="MF_00173"/>
    </source>
</evidence>
<gene>
    <name evidence="1" type="primary">argR</name>
    <name type="ordered locus">ECS88_3613</name>
</gene>
<reference key="1">
    <citation type="journal article" date="2009" name="PLoS Genet.">
        <title>Organised genome dynamics in the Escherichia coli species results in highly diverse adaptive paths.</title>
        <authorList>
            <person name="Touchon M."/>
            <person name="Hoede C."/>
            <person name="Tenaillon O."/>
            <person name="Barbe V."/>
            <person name="Baeriswyl S."/>
            <person name="Bidet P."/>
            <person name="Bingen E."/>
            <person name="Bonacorsi S."/>
            <person name="Bouchier C."/>
            <person name="Bouvet O."/>
            <person name="Calteau A."/>
            <person name="Chiapello H."/>
            <person name="Clermont O."/>
            <person name="Cruveiller S."/>
            <person name="Danchin A."/>
            <person name="Diard M."/>
            <person name="Dossat C."/>
            <person name="Karoui M.E."/>
            <person name="Frapy E."/>
            <person name="Garry L."/>
            <person name="Ghigo J.M."/>
            <person name="Gilles A.M."/>
            <person name="Johnson J."/>
            <person name="Le Bouguenec C."/>
            <person name="Lescat M."/>
            <person name="Mangenot S."/>
            <person name="Martinez-Jehanne V."/>
            <person name="Matic I."/>
            <person name="Nassif X."/>
            <person name="Oztas S."/>
            <person name="Petit M.A."/>
            <person name="Pichon C."/>
            <person name="Rouy Z."/>
            <person name="Ruf C.S."/>
            <person name="Schneider D."/>
            <person name="Tourret J."/>
            <person name="Vacherie B."/>
            <person name="Vallenet D."/>
            <person name="Medigue C."/>
            <person name="Rocha E.P.C."/>
            <person name="Denamur E."/>
        </authorList>
    </citation>
    <scope>NUCLEOTIDE SEQUENCE [LARGE SCALE GENOMIC DNA]</scope>
    <source>
        <strain>S88 / ExPEC</strain>
    </source>
</reference>
<organism>
    <name type="scientific">Escherichia coli O45:K1 (strain S88 / ExPEC)</name>
    <dbReference type="NCBI Taxonomy" id="585035"/>
    <lineage>
        <taxon>Bacteria</taxon>
        <taxon>Pseudomonadati</taxon>
        <taxon>Pseudomonadota</taxon>
        <taxon>Gammaproteobacteria</taxon>
        <taxon>Enterobacterales</taxon>
        <taxon>Enterobacteriaceae</taxon>
        <taxon>Escherichia</taxon>
    </lineage>
</organism>
<comment type="function">
    <text evidence="1">Regulates arginine biosynthesis genes.</text>
</comment>
<comment type="pathway">
    <text>Amino-acid biosynthesis; L-arginine biosynthesis [regulation].</text>
</comment>
<comment type="subcellular location">
    <subcellularLocation>
        <location evidence="1">Cytoplasm</location>
    </subcellularLocation>
</comment>
<comment type="similarity">
    <text evidence="1">Belongs to the ArgR family.</text>
</comment>
<protein>
    <recommendedName>
        <fullName evidence="1">Arginine repressor</fullName>
    </recommendedName>
</protein>
<dbReference type="EMBL" id="CU928161">
    <property type="protein sequence ID" value="CAR04839.1"/>
    <property type="molecule type" value="Genomic_DNA"/>
</dbReference>
<dbReference type="RefSeq" id="WP_001257847.1">
    <property type="nucleotide sequence ID" value="NC_011742.1"/>
</dbReference>
<dbReference type="SMR" id="B7MBZ8"/>
<dbReference type="KEGG" id="ecz:ECS88_3613"/>
<dbReference type="HOGENOM" id="CLU_097103_2_0_6"/>
<dbReference type="UniPathway" id="UPA00068"/>
<dbReference type="Proteomes" id="UP000000747">
    <property type="component" value="Chromosome"/>
</dbReference>
<dbReference type="GO" id="GO:0005737">
    <property type="term" value="C:cytoplasm"/>
    <property type="evidence" value="ECO:0007669"/>
    <property type="project" value="UniProtKB-SubCell"/>
</dbReference>
<dbReference type="GO" id="GO:0034618">
    <property type="term" value="F:arginine binding"/>
    <property type="evidence" value="ECO:0007669"/>
    <property type="project" value="InterPro"/>
</dbReference>
<dbReference type="GO" id="GO:0003677">
    <property type="term" value="F:DNA binding"/>
    <property type="evidence" value="ECO:0007669"/>
    <property type="project" value="UniProtKB-KW"/>
</dbReference>
<dbReference type="GO" id="GO:0003700">
    <property type="term" value="F:DNA-binding transcription factor activity"/>
    <property type="evidence" value="ECO:0007669"/>
    <property type="project" value="UniProtKB-UniRule"/>
</dbReference>
<dbReference type="GO" id="GO:0006526">
    <property type="term" value="P:L-arginine biosynthetic process"/>
    <property type="evidence" value="ECO:0007669"/>
    <property type="project" value="UniProtKB-UniPathway"/>
</dbReference>
<dbReference type="GO" id="GO:0051259">
    <property type="term" value="P:protein complex oligomerization"/>
    <property type="evidence" value="ECO:0007669"/>
    <property type="project" value="InterPro"/>
</dbReference>
<dbReference type="GO" id="GO:1900079">
    <property type="term" value="P:regulation of arginine biosynthetic process"/>
    <property type="evidence" value="ECO:0007669"/>
    <property type="project" value="UniProtKB-UniRule"/>
</dbReference>
<dbReference type="FunFam" id="1.10.10.10:FF:000074">
    <property type="entry name" value="Arginine repressor"/>
    <property type="match status" value="1"/>
</dbReference>
<dbReference type="FunFam" id="3.30.1360.40:FF:000004">
    <property type="entry name" value="Arginine repressor"/>
    <property type="match status" value="1"/>
</dbReference>
<dbReference type="Gene3D" id="3.30.1360.40">
    <property type="match status" value="1"/>
</dbReference>
<dbReference type="Gene3D" id="1.10.10.10">
    <property type="entry name" value="Winged helix-like DNA-binding domain superfamily/Winged helix DNA-binding domain"/>
    <property type="match status" value="1"/>
</dbReference>
<dbReference type="HAMAP" id="MF_00173">
    <property type="entry name" value="Arg_repressor"/>
    <property type="match status" value="1"/>
</dbReference>
<dbReference type="InterPro" id="IPR001669">
    <property type="entry name" value="Arg_repress"/>
</dbReference>
<dbReference type="InterPro" id="IPR020899">
    <property type="entry name" value="Arg_repress_C"/>
</dbReference>
<dbReference type="InterPro" id="IPR036251">
    <property type="entry name" value="Arg_repress_C_sf"/>
</dbReference>
<dbReference type="InterPro" id="IPR020900">
    <property type="entry name" value="Arg_repress_DNA-bd"/>
</dbReference>
<dbReference type="InterPro" id="IPR036388">
    <property type="entry name" value="WH-like_DNA-bd_sf"/>
</dbReference>
<dbReference type="InterPro" id="IPR036390">
    <property type="entry name" value="WH_DNA-bd_sf"/>
</dbReference>
<dbReference type="NCBIfam" id="TIGR01529">
    <property type="entry name" value="argR_whole"/>
    <property type="match status" value="1"/>
</dbReference>
<dbReference type="NCBIfam" id="NF003457">
    <property type="entry name" value="PRK05066.1"/>
    <property type="match status" value="1"/>
</dbReference>
<dbReference type="PANTHER" id="PTHR34471">
    <property type="entry name" value="ARGININE REPRESSOR"/>
    <property type="match status" value="1"/>
</dbReference>
<dbReference type="PANTHER" id="PTHR34471:SF1">
    <property type="entry name" value="ARGININE REPRESSOR"/>
    <property type="match status" value="1"/>
</dbReference>
<dbReference type="Pfam" id="PF01316">
    <property type="entry name" value="Arg_repressor"/>
    <property type="match status" value="1"/>
</dbReference>
<dbReference type="Pfam" id="PF02863">
    <property type="entry name" value="Arg_repressor_C"/>
    <property type="match status" value="1"/>
</dbReference>
<dbReference type="PRINTS" id="PR01467">
    <property type="entry name" value="ARGREPRESSOR"/>
</dbReference>
<dbReference type="SUPFAM" id="SSF55252">
    <property type="entry name" value="C-terminal domain of arginine repressor"/>
    <property type="match status" value="1"/>
</dbReference>
<dbReference type="SUPFAM" id="SSF46785">
    <property type="entry name" value="Winged helix' DNA-binding domain"/>
    <property type="match status" value="1"/>
</dbReference>
<sequence>MRSSAKQEELVKAFKALLKEEKFSSQGEIVAALQEQGFDNINQSKVSRMLTKFGAVRTRNAKMEMVYCLPAELGVPTTSSPLKNLVLDIDYNDAVVVIHTSPGAAQLIARLLDSLGKAEGILGTIAGDDTIFTTPANGFTVKELYEAILELFDQEL</sequence>
<keyword id="KW-0028">Amino-acid biosynthesis</keyword>
<keyword id="KW-0055">Arginine biosynthesis</keyword>
<keyword id="KW-0963">Cytoplasm</keyword>
<keyword id="KW-0238">DNA-binding</keyword>
<keyword id="KW-1185">Reference proteome</keyword>
<keyword id="KW-0678">Repressor</keyword>
<keyword id="KW-0804">Transcription</keyword>
<keyword id="KW-0805">Transcription regulation</keyword>
<accession>B7MBZ8</accession>
<feature type="chain" id="PRO_1000189558" description="Arginine repressor">
    <location>
        <begin position="1"/>
        <end position="156"/>
    </location>
</feature>
<name>ARGR_ECO45</name>
<proteinExistence type="inferred from homology"/>